<gene>
    <name type="primary">ADH3</name>
    <name type="ordered locus">YMR083W</name>
    <name type="ORF">YM9582.08</name>
</gene>
<name>ADH3_YEAST</name>
<reference key="1">
    <citation type="submission" date="1985-10" db="EMBL/GenBank/DDBJ databases">
        <authorList>
            <person name="Pilgrim D."/>
            <person name="Ciriacy M."/>
        </authorList>
    </citation>
    <scope>NUCLEOTIDE SEQUENCE [GENOMIC DNA]</scope>
</reference>
<reference key="2">
    <citation type="journal article" date="1985" name="Mol. Cell. Biol.">
        <title>Isolation and DNA sequence of ADH3, a nuclear gene encoding the mitochondrial isozyme of alcohol dehydrogenase in Saccharomyces cerevisiae.</title>
        <authorList>
            <person name="Young E.T."/>
            <person name="Pilgrim D."/>
        </authorList>
    </citation>
    <scope>NUCLEOTIDE SEQUENCE [GENOMIC DNA]</scope>
    <scope>SUBCELLULAR LOCATION</scope>
</reference>
<reference key="3">
    <citation type="journal article" date="1986" name="Mol. Cell. Biol.">
        <authorList>
            <person name="Young E.T."/>
            <person name="Pilgrim D."/>
        </authorList>
    </citation>
    <scope>ERRATUM OF PUBMED:2943982</scope>
</reference>
<reference key="4">
    <citation type="journal article" date="1997" name="Nature">
        <title>The nucleotide sequence of Saccharomyces cerevisiae chromosome XIII.</title>
        <authorList>
            <person name="Bowman S."/>
            <person name="Churcher C.M."/>
            <person name="Badcock K."/>
            <person name="Brown D."/>
            <person name="Chillingworth T."/>
            <person name="Connor R."/>
            <person name="Dedman K."/>
            <person name="Devlin K."/>
            <person name="Gentles S."/>
            <person name="Hamlin N."/>
            <person name="Hunt S."/>
            <person name="Jagels K."/>
            <person name="Lye G."/>
            <person name="Moule S."/>
            <person name="Odell C."/>
            <person name="Pearson D."/>
            <person name="Rajandream M.A."/>
            <person name="Rice P."/>
            <person name="Skelton J."/>
            <person name="Walsh S.V."/>
            <person name="Whitehead S."/>
            <person name="Barrell B.G."/>
        </authorList>
    </citation>
    <scope>NUCLEOTIDE SEQUENCE [LARGE SCALE GENOMIC DNA]</scope>
    <source>
        <strain>ATCC 204508 / S288c</strain>
    </source>
</reference>
<reference key="5">
    <citation type="journal article" date="2014" name="G3 (Bethesda)">
        <title>The reference genome sequence of Saccharomyces cerevisiae: Then and now.</title>
        <authorList>
            <person name="Engel S.R."/>
            <person name="Dietrich F.S."/>
            <person name="Fisk D.G."/>
            <person name="Binkley G."/>
            <person name="Balakrishnan R."/>
            <person name="Costanzo M.C."/>
            <person name="Dwight S.S."/>
            <person name="Hitz B.C."/>
            <person name="Karra K."/>
            <person name="Nash R.S."/>
            <person name="Weng S."/>
            <person name="Wong E.D."/>
            <person name="Lloyd P."/>
            <person name="Skrzypek M.S."/>
            <person name="Miyasato S.R."/>
            <person name="Simison M."/>
            <person name="Cherry J.M."/>
        </authorList>
    </citation>
    <scope>GENOME REANNOTATION</scope>
    <source>
        <strain>ATCC 204508 / S288c</strain>
    </source>
</reference>
<reference key="6">
    <citation type="journal article" date="2007" name="Genome Res.">
        <title>Approaching a complete repository of sequence-verified protein-encoding clones for Saccharomyces cerevisiae.</title>
        <authorList>
            <person name="Hu Y."/>
            <person name="Rolfs A."/>
            <person name="Bhullar B."/>
            <person name="Murthy T.V.S."/>
            <person name="Zhu C."/>
            <person name="Berger M.F."/>
            <person name="Camargo A.A."/>
            <person name="Kelley F."/>
            <person name="McCarron S."/>
            <person name="Jepson D."/>
            <person name="Richardson A."/>
            <person name="Raphael J."/>
            <person name="Moreira D."/>
            <person name="Taycher E."/>
            <person name="Zuo D."/>
            <person name="Mohr S."/>
            <person name="Kane M.F."/>
            <person name="Williamson J."/>
            <person name="Simpson A.J.G."/>
            <person name="Bulyk M.L."/>
            <person name="Harlow E."/>
            <person name="Marsischky G."/>
            <person name="Kolodner R.D."/>
            <person name="LaBaer J."/>
        </authorList>
    </citation>
    <scope>NUCLEOTIDE SEQUENCE [GENOMIC DNA]</scope>
    <source>
        <strain>ATCC 204508 / S288c</strain>
    </source>
</reference>
<reference key="7">
    <citation type="journal article" date="1975" name="Biochim. Biophys. Acta">
        <title>Multiple forms of mitochondrial alcohol dehydrogenase in Saccharomyces cerevisiae.</title>
        <authorList>
            <person name="Wiesenfeld M."/>
            <person name="Schimpfessel L."/>
            <person name="Crokaert R."/>
        </authorList>
    </citation>
    <scope>SUBUNIT</scope>
    <scope>SUBCELLULAR LOCATION</scope>
</reference>
<reference key="8">
    <citation type="journal article" date="1986" name="EMBO J.">
        <title>Intracellular sorting of alcohol dehydrogenase isoenzymes in yeast: a cytosolic location reflects absence of an amino-terminal targeting sequence for the mitochondrion.</title>
        <authorList>
            <person name="van Loon A.P."/>
            <person name="Young E.T."/>
        </authorList>
    </citation>
    <scope>SUBCELLULAR LOCATION</scope>
</reference>
<reference key="9">
    <citation type="journal article" date="1987" name="J. Biol. Chem.">
        <title>Kinetic characterization of yeast alcohol dehydrogenases. Amino acid residue 294 and substrate specificity.</title>
        <authorList>
            <person name="Ganzhorn A.J."/>
            <person name="Green D.W."/>
            <person name="Hershey A.D."/>
            <person name="Gould R.M."/>
            <person name="Plapp B.V."/>
        </authorList>
    </citation>
    <scope>FUNCTION</scope>
    <scope>CATALYTIC ACTIVITY</scope>
    <scope>BIOPHYSICOCHEMICAL PROPERTIES</scope>
</reference>
<reference key="10">
    <citation type="journal article" date="1990" name="Mol. Cell. Biol.">
        <title>Mutant alcohol dehydrogenase (ADH III) presequences that affect both in vitro mitochondrial import and in vitro processing by the matrix protease.</title>
        <authorList>
            <person name="Mooney D.T."/>
            <person name="Pilgrim D.B."/>
            <person name="Young E.T."/>
        </authorList>
    </citation>
    <scope>SUBCELLULAR LOCATION</scope>
    <scope>CLEAVAGE BY MATRIX PROCESSING PROTEASE</scope>
</reference>
<reference key="11">
    <citation type="journal article" date="2000" name="J. Bacteriol.">
        <title>The mitochondrial alcohol dehydrogenase Adh3p is involved in a redox shuttle in Saccharomyces cerevisiae.</title>
        <authorList>
            <person name="Bakker B.M."/>
            <person name="Bro C."/>
            <person name="Koetter P."/>
            <person name="Luttik M.A."/>
            <person name="van Dijken J.P."/>
            <person name="Pronk J.T."/>
        </authorList>
    </citation>
    <scope>FUNCTION</scope>
</reference>
<reference key="12">
    <citation type="journal article" date="2002" name="FEMS Yeast Res.">
        <title>The three zinc-containing alcohol dehydrogenases from baker's yeast, Saccharomyces cerevisiae.</title>
        <authorList>
            <person name="Leskovac V."/>
            <person name="Trivic S."/>
            <person name="Pericin D."/>
        </authorList>
    </citation>
    <scope>REVIEW</scope>
</reference>
<reference key="13">
    <citation type="journal article" date="2003" name="Nature">
        <title>Global analysis of protein expression in yeast.</title>
        <authorList>
            <person name="Ghaemmaghami S."/>
            <person name="Huh W.-K."/>
            <person name="Bower K."/>
            <person name="Howson R.W."/>
            <person name="Belle A."/>
            <person name="Dephoure N."/>
            <person name="O'Shea E.K."/>
            <person name="Weissman J.S."/>
        </authorList>
    </citation>
    <scope>LEVEL OF PROTEIN EXPRESSION [LARGE SCALE ANALYSIS]</scope>
</reference>
<reference key="14">
    <citation type="journal article" date="2012" name="FEMS Yeast Res.">
        <title>Molecular and physiological aspects of alcohol dehydrogenases in the ethanol metabolism of Saccharomyces cerevisiae.</title>
        <authorList>
            <person name="de Smidt O."/>
            <person name="du Preez J.C."/>
            <person name="Albertyn J."/>
        </authorList>
    </citation>
    <scope>FUNCTION</scope>
</reference>
<keyword id="KW-0472">Membrane</keyword>
<keyword id="KW-0479">Metal-binding</keyword>
<keyword id="KW-0496">Mitochondrion</keyword>
<keyword id="KW-0999">Mitochondrion inner membrane</keyword>
<keyword id="KW-0520">NAD</keyword>
<keyword id="KW-0560">Oxidoreductase</keyword>
<keyword id="KW-1185">Reference proteome</keyword>
<keyword id="KW-0809">Transit peptide</keyword>
<keyword id="KW-0862">Zinc</keyword>
<dbReference type="EC" id="1.1.1.1" evidence="9"/>
<dbReference type="EMBL" id="K03292">
    <property type="protein sequence ID" value="AAA34409.1"/>
    <property type="molecule type" value="Genomic_DNA"/>
</dbReference>
<dbReference type="EMBL" id="Z49259">
    <property type="protein sequence ID" value="CAA89229.1"/>
    <property type="molecule type" value="Genomic_DNA"/>
</dbReference>
<dbReference type="EMBL" id="AY692988">
    <property type="protein sequence ID" value="AAT93007.1"/>
    <property type="molecule type" value="Genomic_DNA"/>
</dbReference>
<dbReference type="EMBL" id="BK006946">
    <property type="protein sequence ID" value="DAA09980.1"/>
    <property type="molecule type" value="Genomic_DNA"/>
</dbReference>
<dbReference type="PIR" id="S54458">
    <property type="entry name" value="S54458"/>
</dbReference>
<dbReference type="RefSeq" id="NP_013800.1">
    <property type="nucleotide sequence ID" value="NM_001182582.1"/>
</dbReference>
<dbReference type="SMR" id="P07246"/>
<dbReference type="BioGRID" id="35258">
    <property type="interactions" value="221"/>
</dbReference>
<dbReference type="DIP" id="DIP-4445N"/>
<dbReference type="FunCoup" id="P07246">
    <property type="interactions" value="263"/>
</dbReference>
<dbReference type="IntAct" id="P07246">
    <property type="interactions" value="60"/>
</dbReference>
<dbReference type="MINT" id="P07246"/>
<dbReference type="STRING" id="4932.YMR083W"/>
<dbReference type="CarbonylDB" id="P07246"/>
<dbReference type="iPTMnet" id="P07246"/>
<dbReference type="PaxDb" id="4932-YMR083W"/>
<dbReference type="PeptideAtlas" id="P07246"/>
<dbReference type="EnsemblFungi" id="YMR083W_mRNA">
    <property type="protein sequence ID" value="YMR083W"/>
    <property type="gene ID" value="YMR083W"/>
</dbReference>
<dbReference type="GeneID" id="855107"/>
<dbReference type="KEGG" id="sce:YMR083W"/>
<dbReference type="AGR" id="SGD:S000004688"/>
<dbReference type="SGD" id="S000004688">
    <property type="gene designation" value="ADH3"/>
</dbReference>
<dbReference type="VEuPathDB" id="FungiDB:YMR083W"/>
<dbReference type="eggNOG" id="KOG0023">
    <property type="taxonomic scope" value="Eukaryota"/>
</dbReference>
<dbReference type="GeneTree" id="ENSGT00940000171159"/>
<dbReference type="HOGENOM" id="CLU_026673_20_1_1"/>
<dbReference type="InParanoid" id="P07246"/>
<dbReference type="OMA" id="AWFYDAC"/>
<dbReference type="OrthoDB" id="1879366at2759"/>
<dbReference type="BioCyc" id="MetaCyc:YMR083W-MONOMER"/>
<dbReference type="BioCyc" id="YEAST:YMR083W-MONOMER"/>
<dbReference type="BioGRID-ORCS" id="855107">
    <property type="hits" value="1 hit in 10 CRISPR screens"/>
</dbReference>
<dbReference type="PRO" id="PR:P07246"/>
<dbReference type="Proteomes" id="UP000002311">
    <property type="component" value="Chromosome XIII"/>
</dbReference>
<dbReference type="RNAct" id="P07246">
    <property type="molecule type" value="protein"/>
</dbReference>
<dbReference type="GO" id="GO:0005737">
    <property type="term" value="C:cytoplasm"/>
    <property type="evidence" value="ECO:0000318"/>
    <property type="project" value="GO_Central"/>
</dbReference>
<dbReference type="GO" id="GO:0005743">
    <property type="term" value="C:mitochondrial inner membrane"/>
    <property type="evidence" value="ECO:0007669"/>
    <property type="project" value="UniProtKB-SubCell"/>
</dbReference>
<dbReference type="GO" id="GO:0005759">
    <property type="term" value="C:mitochondrial matrix"/>
    <property type="evidence" value="ECO:0000314"/>
    <property type="project" value="SGD"/>
</dbReference>
<dbReference type="GO" id="GO:0005739">
    <property type="term" value="C:mitochondrion"/>
    <property type="evidence" value="ECO:0007005"/>
    <property type="project" value="SGD"/>
</dbReference>
<dbReference type="GO" id="GO:0004022">
    <property type="term" value="F:alcohol dehydrogenase (NAD+) activity"/>
    <property type="evidence" value="ECO:0000314"/>
    <property type="project" value="SGD"/>
</dbReference>
<dbReference type="GO" id="GO:1990362">
    <property type="term" value="F:butanol dehydrogenase (NAD+) activity"/>
    <property type="evidence" value="ECO:0007669"/>
    <property type="project" value="RHEA"/>
</dbReference>
<dbReference type="GO" id="GO:0120542">
    <property type="term" value="F:ethanol dehydrogenase (NAD+) activity"/>
    <property type="evidence" value="ECO:0007669"/>
    <property type="project" value="RHEA"/>
</dbReference>
<dbReference type="GO" id="GO:0008270">
    <property type="term" value="F:zinc ion binding"/>
    <property type="evidence" value="ECO:0007669"/>
    <property type="project" value="InterPro"/>
</dbReference>
<dbReference type="GO" id="GO:0000947">
    <property type="term" value="P:amino acid catabolic process to alcohol via Ehrlich pathway"/>
    <property type="evidence" value="ECO:0000316"/>
    <property type="project" value="SGD"/>
</dbReference>
<dbReference type="CDD" id="cd08297">
    <property type="entry name" value="CAD3"/>
    <property type="match status" value="1"/>
</dbReference>
<dbReference type="FunFam" id="3.40.50.720:FF:000039">
    <property type="entry name" value="Alcohol dehydrogenase AdhP"/>
    <property type="match status" value="1"/>
</dbReference>
<dbReference type="FunFam" id="3.90.180.10:FF:000002">
    <property type="entry name" value="Alcohol dehydrogenase AdhP"/>
    <property type="match status" value="1"/>
</dbReference>
<dbReference type="Gene3D" id="3.90.180.10">
    <property type="entry name" value="Medium-chain alcohol dehydrogenases, catalytic domain"/>
    <property type="match status" value="1"/>
</dbReference>
<dbReference type="Gene3D" id="3.40.50.720">
    <property type="entry name" value="NAD(P)-binding Rossmann-like Domain"/>
    <property type="match status" value="1"/>
</dbReference>
<dbReference type="InterPro" id="IPR013149">
    <property type="entry name" value="ADH-like_C"/>
</dbReference>
<dbReference type="InterPro" id="IPR013154">
    <property type="entry name" value="ADH-like_N"/>
</dbReference>
<dbReference type="InterPro" id="IPR002328">
    <property type="entry name" value="ADH_Zn_CS"/>
</dbReference>
<dbReference type="InterPro" id="IPR011032">
    <property type="entry name" value="GroES-like_sf"/>
</dbReference>
<dbReference type="InterPro" id="IPR036291">
    <property type="entry name" value="NAD(P)-bd_dom_sf"/>
</dbReference>
<dbReference type="InterPro" id="IPR020843">
    <property type="entry name" value="PKS_ER"/>
</dbReference>
<dbReference type="PANTHER" id="PTHR42940">
    <property type="entry name" value="ALCOHOL DEHYDROGENASE 1-RELATED"/>
    <property type="match status" value="1"/>
</dbReference>
<dbReference type="PANTHER" id="PTHR42940:SF3">
    <property type="entry name" value="ALCOHOL DEHYDROGENASE 1-RELATED"/>
    <property type="match status" value="1"/>
</dbReference>
<dbReference type="Pfam" id="PF08240">
    <property type="entry name" value="ADH_N"/>
    <property type="match status" value="1"/>
</dbReference>
<dbReference type="Pfam" id="PF00107">
    <property type="entry name" value="ADH_zinc_N"/>
    <property type="match status" value="1"/>
</dbReference>
<dbReference type="SMART" id="SM00829">
    <property type="entry name" value="PKS_ER"/>
    <property type="match status" value="1"/>
</dbReference>
<dbReference type="SUPFAM" id="SSF50129">
    <property type="entry name" value="GroES-like"/>
    <property type="match status" value="1"/>
</dbReference>
<dbReference type="SUPFAM" id="SSF51735">
    <property type="entry name" value="NAD(P)-binding Rossmann-fold domains"/>
    <property type="match status" value="1"/>
</dbReference>
<dbReference type="PROSITE" id="PS00059">
    <property type="entry name" value="ADH_ZINC"/>
    <property type="match status" value="1"/>
</dbReference>
<comment type="function">
    <text evidence="2 3 6 11">Mitochondrial isozyme that reduces acetaldehyde to ethanol during the fermentation of glucose (Probable) (PubMed:22094012). Involved in the shuttling of mitochondrial reducing equivalents to the cytosol, where the redox balance is restored by NADH dehydrogenases on the external side of the mitochondrial inner membrane (PubMed:10940011). Shows a high affinity for alcohols with a double bond conjugated to the alcohol group (PubMed:1101965).</text>
</comment>
<comment type="catalytic activity">
    <reaction evidence="11">
        <text>a primary alcohol + NAD(+) = an aldehyde + NADH + H(+)</text>
        <dbReference type="Rhea" id="RHEA:10736"/>
        <dbReference type="ChEBI" id="CHEBI:15378"/>
        <dbReference type="ChEBI" id="CHEBI:15734"/>
        <dbReference type="ChEBI" id="CHEBI:17478"/>
        <dbReference type="ChEBI" id="CHEBI:57540"/>
        <dbReference type="ChEBI" id="CHEBI:57945"/>
        <dbReference type="EC" id="1.1.1.1"/>
    </reaction>
</comment>
<comment type="catalytic activity">
    <reaction evidence="11">
        <text>a secondary alcohol + NAD(+) = a ketone + NADH + H(+)</text>
        <dbReference type="Rhea" id="RHEA:10740"/>
        <dbReference type="ChEBI" id="CHEBI:15378"/>
        <dbReference type="ChEBI" id="CHEBI:17087"/>
        <dbReference type="ChEBI" id="CHEBI:35681"/>
        <dbReference type="ChEBI" id="CHEBI:57540"/>
        <dbReference type="ChEBI" id="CHEBI:57945"/>
        <dbReference type="EC" id="1.1.1.1"/>
    </reaction>
</comment>
<comment type="catalytic activity">
    <reaction evidence="9">
        <text>ethanol + NAD(+) = acetaldehyde + NADH + H(+)</text>
        <dbReference type="Rhea" id="RHEA:25290"/>
        <dbReference type="ChEBI" id="CHEBI:15343"/>
        <dbReference type="ChEBI" id="CHEBI:15378"/>
        <dbReference type="ChEBI" id="CHEBI:16236"/>
        <dbReference type="ChEBI" id="CHEBI:57540"/>
        <dbReference type="ChEBI" id="CHEBI:57945"/>
        <dbReference type="EC" id="1.1.1.1"/>
    </reaction>
    <physiologicalReaction direction="left-to-right" evidence="9">
        <dbReference type="Rhea" id="RHEA:25291"/>
    </physiologicalReaction>
    <physiologicalReaction direction="right-to-left" evidence="9">
        <dbReference type="Rhea" id="RHEA:25292"/>
    </physiologicalReaction>
</comment>
<comment type="catalytic activity">
    <reaction evidence="9">
        <text>butan-1-ol + NAD(+) = butanal + NADH + H(+)</text>
        <dbReference type="Rhea" id="RHEA:33199"/>
        <dbReference type="ChEBI" id="CHEBI:15378"/>
        <dbReference type="ChEBI" id="CHEBI:15743"/>
        <dbReference type="ChEBI" id="CHEBI:28885"/>
        <dbReference type="ChEBI" id="CHEBI:57540"/>
        <dbReference type="ChEBI" id="CHEBI:57945"/>
    </reaction>
    <physiologicalReaction direction="left-to-right" evidence="9">
        <dbReference type="Rhea" id="RHEA:33200"/>
    </physiologicalReaction>
</comment>
<comment type="catalytic activity">
    <reaction evidence="9">
        <text>hexan-1-ol + NAD(+) = hexanal + NADH + H(+)</text>
        <dbReference type="Rhea" id="RHEA:60972"/>
        <dbReference type="ChEBI" id="CHEBI:15378"/>
        <dbReference type="ChEBI" id="CHEBI:57540"/>
        <dbReference type="ChEBI" id="CHEBI:57945"/>
        <dbReference type="ChEBI" id="CHEBI:87393"/>
        <dbReference type="ChEBI" id="CHEBI:88528"/>
    </reaction>
    <physiologicalReaction direction="left-to-right" evidence="9">
        <dbReference type="Rhea" id="RHEA:60973"/>
    </physiologicalReaction>
</comment>
<comment type="cofactor">
    <cofactor evidence="1">
        <name>Zn(2+)</name>
        <dbReference type="ChEBI" id="CHEBI:29105"/>
    </cofactor>
    <text evidence="1">Binds 2 Zn(2+) ions per subunit.</text>
</comment>
<comment type="biophysicochemical properties">
    <kinetics>
        <KM evidence="9">240 uM for NAD(+)</KM>
        <KM evidence="9">12 mM for ethanol</KM>
        <KM evidence="9">0.44 mM for acetaldehyde</KM>
        <KM evidence="9">70 uM for NADH</KM>
        <KM evidence="9">11 mM for propanol</KM>
        <KM evidence="9">7.7 mM for butanol</KM>
        <KM evidence="9">5.2 mM for pentanol</KM>
        <KM evidence="9">1.9 mM for hexanol</KM>
    </kinetics>
</comment>
<comment type="subunit">
    <text evidence="3">Homotetramer.</text>
</comment>
<comment type="subcellular location">
    <subcellularLocation>
        <location evidence="3 5 8">Mitochondrion matrix</location>
    </subcellularLocation>
    <subcellularLocation>
        <location evidence="7">Mitochondrion inner membrane</location>
    </subcellularLocation>
</comment>
<comment type="miscellaneous">
    <text evidence="4">Present with 11600 molecules/cell in log phase SD medium.</text>
</comment>
<comment type="similarity">
    <text evidence="10">Belongs to the zinc-containing alcohol dehydrogenase family.</text>
</comment>
<proteinExistence type="evidence at protein level"/>
<feature type="transit peptide" description="Mitochondrion" evidence="12">
    <location>
        <begin position="1"/>
        <end position="24"/>
    </location>
</feature>
<feature type="chain" id="PRO_0000000879" description="Alcohol dehydrogenase 3, mitochondrial">
    <location>
        <begin position="25"/>
        <end position="375"/>
    </location>
</feature>
<feature type="binding site" evidence="1">
    <location>
        <position position="71"/>
    </location>
    <ligand>
        <name>Zn(2+)</name>
        <dbReference type="ChEBI" id="CHEBI:29105"/>
        <label>1</label>
        <note>catalytic</note>
    </ligand>
</feature>
<feature type="binding site" evidence="1">
    <location>
        <position position="72"/>
    </location>
    <ligand>
        <name>NAD(+)</name>
        <dbReference type="ChEBI" id="CHEBI:57540"/>
    </ligand>
</feature>
<feature type="binding site" evidence="1">
    <location>
        <position position="73"/>
    </location>
    <ligand>
        <name>NAD(+)</name>
        <dbReference type="ChEBI" id="CHEBI:57540"/>
    </ligand>
</feature>
<feature type="binding site" evidence="1">
    <location>
        <position position="76"/>
    </location>
    <ligand>
        <name>NAD(+)</name>
        <dbReference type="ChEBI" id="CHEBI:57540"/>
    </ligand>
</feature>
<feature type="binding site" evidence="1">
    <location>
        <position position="94"/>
    </location>
    <ligand>
        <name>Zn(2+)</name>
        <dbReference type="ChEBI" id="CHEBI:29105"/>
        <label>1</label>
        <note>catalytic</note>
    </ligand>
</feature>
<feature type="binding site" evidence="1">
    <location>
        <position position="95"/>
    </location>
    <ligand>
        <name>Zn(2+)</name>
        <dbReference type="ChEBI" id="CHEBI:29105"/>
        <label>1</label>
        <note>catalytic</note>
    </ligand>
</feature>
<feature type="binding site" evidence="1">
    <location>
        <position position="125"/>
    </location>
    <ligand>
        <name>Zn(2+)</name>
        <dbReference type="ChEBI" id="CHEBI:29105"/>
        <label>2</label>
    </ligand>
</feature>
<feature type="binding site" evidence="1">
    <location>
        <position position="128"/>
    </location>
    <ligand>
        <name>Zn(2+)</name>
        <dbReference type="ChEBI" id="CHEBI:29105"/>
        <label>2</label>
    </ligand>
</feature>
<feature type="binding site" evidence="1">
    <location>
        <position position="131"/>
    </location>
    <ligand>
        <name>Zn(2+)</name>
        <dbReference type="ChEBI" id="CHEBI:29105"/>
        <label>2</label>
    </ligand>
</feature>
<feature type="binding site" evidence="1">
    <location>
        <position position="139"/>
    </location>
    <ligand>
        <name>Zn(2+)</name>
        <dbReference type="ChEBI" id="CHEBI:29105"/>
        <label>2</label>
    </ligand>
</feature>
<feature type="binding site" evidence="1">
    <location>
        <position position="181"/>
    </location>
    <ligand>
        <name>Zn(2+)</name>
        <dbReference type="ChEBI" id="CHEBI:29105"/>
        <label>1</label>
        <note>catalytic</note>
    </ligand>
</feature>
<feature type="binding site" evidence="1">
    <location>
        <position position="208"/>
    </location>
    <ligand>
        <name>NAD(+)</name>
        <dbReference type="ChEBI" id="CHEBI:57540"/>
    </ligand>
</feature>
<feature type="binding site" evidence="1">
    <location>
        <position position="209"/>
    </location>
    <ligand>
        <name>NAD(+)</name>
        <dbReference type="ChEBI" id="CHEBI:57540"/>
    </ligand>
</feature>
<feature type="binding site" evidence="1">
    <location>
        <position position="210"/>
    </location>
    <ligand>
        <name>NAD(+)</name>
        <dbReference type="ChEBI" id="CHEBI:57540"/>
    </ligand>
</feature>
<feature type="binding site" evidence="1">
    <location>
        <position position="229"/>
    </location>
    <ligand>
        <name>NAD(+)</name>
        <dbReference type="ChEBI" id="CHEBI:57540"/>
    </ligand>
</feature>
<feature type="binding site" evidence="1">
    <location>
        <position position="234"/>
    </location>
    <ligand>
        <name>NAD(+)</name>
        <dbReference type="ChEBI" id="CHEBI:57540"/>
    </ligand>
</feature>
<feature type="binding site" evidence="1">
    <location>
        <position position="249"/>
    </location>
    <ligand>
        <name>NAD(+)</name>
        <dbReference type="ChEBI" id="CHEBI:57540"/>
    </ligand>
</feature>
<feature type="binding site" evidence="1">
    <location>
        <position position="296"/>
    </location>
    <ligand>
        <name>NAD(+)</name>
        <dbReference type="ChEBI" id="CHEBI:57540"/>
    </ligand>
</feature>
<feature type="binding site" evidence="1">
    <location>
        <position position="321"/>
    </location>
    <ligand>
        <name>NAD(+)</name>
        <dbReference type="ChEBI" id="CHEBI:57540"/>
    </ligand>
</feature>
<feature type="binding site" evidence="1">
    <location>
        <position position="323"/>
    </location>
    <ligand>
        <name>NAD(+)</name>
        <dbReference type="ChEBI" id="CHEBI:57540"/>
    </ligand>
</feature>
<feature type="binding site" evidence="1">
    <location>
        <position position="368"/>
    </location>
    <ligand>
        <name>NAD(+)</name>
        <dbReference type="ChEBI" id="CHEBI:57540"/>
    </ligand>
</feature>
<feature type="sequence conflict" description="In Ref. 1; AAA34409." evidence="10" ref="1">
    <original>R</original>
    <variation>K</variation>
    <location>
        <position position="10"/>
    </location>
</feature>
<feature type="sequence conflict" description="In Ref. 1; AAA34409." evidence="10" ref="1">
    <original>K</original>
    <variation>N</variation>
    <location>
        <position position="45"/>
    </location>
</feature>
<accession>P07246</accession>
<accession>D6VZQ6</accession>
<protein>
    <recommendedName>
        <fullName evidence="10">Alcohol dehydrogenase 3, mitochondrial</fullName>
        <ecNumber evidence="9">1.1.1.1</ecNumber>
    </recommendedName>
    <alternativeName>
        <fullName>Alcohol dehydrogenase III</fullName>
        <shortName>ADHIII</shortName>
    </alternativeName>
    <alternativeName>
        <fullName>YADH-3</fullName>
    </alternativeName>
</protein>
<sequence length="375" mass="40370">MLRTSTLFTRRVQPSLFSRNILRLQSTAAIPKTQKGVIFYENKGKLHYKDIPVPEPKPNEILINVKYSGVCHTDLHAWHGDWPLPVKLPLVGGHEGAGVVVKLGSNVKGWKVGDLAGIKWLNGSCMTCEFCESGHESNCPDADLSGYTHDGSFQQFATADAIQAAKIQQGTDLAEVAPILCAGVTVYKALKEADLKAGDWVAISGAAGGLGSLAVQYATAMGYRVLGIDAGEEKEKLFKKLGGEVFIDFTKTKNMVSDIQEATKGGPHGVINVSVSEAAISLSTEYVRPCGTVVLVGLPANAYVKSEVFSHVVKSINIKGSYVGNRADTREALDFFSRGLIKSPIKIVGLSELPKVYDLMEKGKILGRYVVDTSK</sequence>
<organism>
    <name type="scientific">Saccharomyces cerevisiae (strain ATCC 204508 / S288c)</name>
    <name type="common">Baker's yeast</name>
    <dbReference type="NCBI Taxonomy" id="559292"/>
    <lineage>
        <taxon>Eukaryota</taxon>
        <taxon>Fungi</taxon>
        <taxon>Dikarya</taxon>
        <taxon>Ascomycota</taxon>
        <taxon>Saccharomycotina</taxon>
        <taxon>Saccharomycetes</taxon>
        <taxon>Saccharomycetales</taxon>
        <taxon>Saccharomycetaceae</taxon>
        <taxon>Saccharomyces</taxon>
    </lineage>
</organism>
<evidence type="ECO:0000250" key="1">
    <source>
        <dbReference type="UniProtKB" id="P00330"/>
    </source>
</evidence>
<evidence type="ECO:0000269" key="2">
    <source>
    </source>
</evidence>
<evidence type="ECO:0000269" key="3">
    <source>
    </source>
</evidence>
<evidence type="ECO:0000269" key="4">
    <source>
    </source>
</evidence>
<evidence type="ECO:0000269" key="5">
    <source>
    </source>
</evidence>
<evidence type="ECO:0000269" key="6">
    <source>
    </source>
</evidence>
<evidence type="ECO:0000269" key="7">
    <source>
    </source>
</evidence>
<evidence type="ECO:0000269" key="8">
    <source>
    </source>
</evidence>
<evidence type="ECO:0000269" key="9">
    <source>
    </source>
</evidence>
<evidence type="ECO:0000305" key="10"/>
<evidence type="ECO:0000305" key="11">
    <source>
    </source>
</evidence>
<evidence type="ECO:0000305" key="12">
    <source>
    </source>
</evidence>